<protein>
    <recommendedName>
        <fullName evidence="5">Transcription activator AKTR-3</fullName>
    </recommendedName>
    <alternativeName>
        <fullName evidence="5">AK-toxin biosynthesis regulator 3</fullName>
    </alternativeName>
</protein>
<comment type="function">
    <text evidence="4 6">Transcription factor that regulates the expression of the gene clusters that mediate the biosynthesis of the host-selective toxins (HSTs) AK-toxins responsible for Japanese pear black spot disease by the Japanese pear pathotype (Probable). AK-toxins are esters of 9,10-epoxy 8-hydroxy 9-methyldecatrienoic acid (EDA) (PubMed:22846083). On cellular level, AK-toxins affect plasma membrane of susceptible cells and cause a sudden increase in loss of K(+) after a few minutes of toxin treatment (PubMed:22846083).</text>
</comment>
<comment type="subcellular location">
    <subcellularLocation>
        <location evidence="1">Nucleus</location>
    </subcellularLocation>
</comment>
<comment type="miscellaneous">
    <text evidence="3">Gene clusters encoding host-selective toxins (HSTs) are localized on conditionally dispensable chromosomes (CDCs), also called supernumerary chromosomes, where they are present in multiple copies (PubMed:10975654). The CDCs are not essential for saprophytic growth but controls host-selective pathogenicity (PubMed:10975654).</text>
</comment>
<organism>
    <name type="scientific">Alternaria alternata</name>
    <name type="common">Alternaria rot fungus</name>
    <name type="synonym">Torula alternata</name>
    <dbReference type="NCBI Taxonomy" id="5599"/>
    <lineage>
        <taxon>Eukaryota</taxon>
        <taxon>Fungi</taxon>
        <taxon>Dikarya</taxon>
        <taxon>Ascomycota</taxon>
        <taxon>Pezizomycotina</taxon>
        <taxon>Dothideomycetes</taxon>
        <taxon>Pleosporomycetidae</taxon>
        <taxon>Pleosporales</taxon>
        <taxon>Pleosporineae</taxon>
        <taxon>Pleosporaceae</taxon>
        <taxon>Alternaria</taxon>
        <taxon>Alternaria sect. Alternaria</taxon>
        <taxon>Alternaria alternata complex</taxon>
    </lineage>
</organism>
<proteinExistence type="inferred from homology"/>
<name>AKTR3_ALTAL</name>
<accession>V5XYQ2</accession>
<reference key="1">
    <citation type="journal article" date="2014" name="New Phytol.">
        <title>Complex regulation of secondary metabolism controlling pathogenicity in the phytopathogenic fungus Alternaria alternata.</title>
        <authorList>
            <person name="Takaoka S."/>
            <person name="Kurata M."/>
            <person name="Harimoto Y."/>
            <person name="Hatta R."/>
            <person name="Yamamoto M."/>
            <person name="Akimitsu K."/>
            <person name="Tsuge T."/>
        </authorList>
    </citation>
    <scope>NUCLEOTIDE SEQUENCE [GENOMIC DNA]</scope>
    <scope>FUNCTION</scope>
    <source>
        <strain>15A</strain>
    </source>
</reference>
<reference key="2">
    <citation type="journal article" date="2000" name="Mol. Plant Microbe Interact.">
        <title>Structural and functional complexity of the genomic region controlling AK-toxin biosynthesis and pathogenicity in the Japanese pear pathotype of Alternaria alternata.</title>
        <authorList>
            <person name="Tanaka A."/>
            <person name="Tsuge T."/>
        </authorList>
    </citation>
    <scope>FUNCTION</scope>
</reference>
<reference key="3">
    <citation type="journal article" date="2013" name="FEMS Microbiol. Rev.">
        <title>Host-selective toxins produced by the plant pathogenic fungus Alternaria alternata.</title>
        <authorList>
            <person name="Tsuge T."/>
            <person name="Harimoto Y."/>
            <person name="Akimitsu K."/>
            <person name="Ohtani K."/>
            <person name="Kodama M."/>
            <person name="Akagi Y."/>
            <person name="Egusa M."/>
            <person name="Yamamoto M."/>
            <person name="Otani H."/>
        </authorList>
    </citation>
    <scope>REVIEW ON HOST-SELECTIVE TOXINS</scope>
</reference>
<gene>
    <name evidence="5" type="primary">AKTR-3</name>
</gene>
<evidence type="ECO:0000255" key="1">
    <source>
        <dbReference type="PROSITE-ProRule" id="PRU00227"/>
    </source>
</evidence>
<evidence type="ECO:0000256" key="2">
    <source>
        <dbReference type="SAM" id="MobiDB-lite"/>
    </source>
</evidence>
<evidence type="ECO:0000269" key="3">
    <source>
    </source>
</evidence>
<evidence type="ECO:0000303" key="4">
    <source>
    </source>
</evidence>
<evidence type="ECO:0000303" key="5">
    <source>
    </source>
</evidence>
<evidence type="ECO:0000305" key="6">
    <source>
    </source>
</evidence>
<sequence>MLQCAPKKNERLRGSCDFCTQSKLRCNKNKPSCRRCTIQQQPCVYSVARRTGRPPKHPRTANDCQEANGQHGEQDPVTSTPGGSCQQQSNHLLDVEGDGANFTLADASTTAQGRETPASSALDNALLVGETFGFSSLLDDPLIQSDDFLSFSLCMPPGEEEGHMASPRALNGSTGPCSPTVLSSIDVPHLPARFGFLESSVESGLHGRTGPHLVEQPDKIVPSSFSEMEKIYDEGLTFSGLDSAINAVTNNGKGEPSASGTMAAHPHSKRQCFCSTSMSKLQMLISHPTLCQKNSRARFDMTLFLEEVVFNIHRDVLQCLVCQSKSLHSLASLCICTDWVIEALRDVAQDLSSGQDNLGGFRAGLCPPKDKFSICVGRFVLDDQLRESCTRSLVKYRLRKLVPIMDTMMKLNYRGAGGALSQAIRTMVEDVRHKIESALGMMEL</sequence>
<feature type="chain" id="PRO_0000444843" description="Transcription activator AKTR-3">
    <location>
        <begin position="1"/>
        <end position="444"/>
    </location>
</feature>
<feature type="DNA-binding region" description="Zn(2)-C6 fungal-type" evidence="1">
    <location>
        <begin position="16"/>
        <end position="43"/>
    </location>
</feature>
<feature type="region of interest" description="Disordered" evidence="2">
    <location>
        <begin position="49"/>
        <end position="89"/>
    </location>
</feature>
<feature type="compositionally biased region" description="Basic residues" evidence="2">
    <location>
        <begin position="50"/>
        <end position="59"/>
    </location>
</feature>
<feature type="compositionally biased region" description="Polar residues" evidence="2">
    <location>
        <begin position="76"/>
        <end position="89"/>
    </location>
</feature>
<keyword id="KW-0238">DNA-binding</keyword>
<keyword id="KW-0479">Metal-binding</keyword>
<keyword id="KW-0539">Nucleus</keyword>
<keyword id="KW-0804">Transcription</keyword>
<keyword id="KW-0805">Transcription regulation</keyword>
<keyword id="KW-0862">Zinc</keyword>
<dbReference type="EMBL" id="AB872924">
    <property type="protein sequence ID" value="BAO10615.1"/>
    <property type="molecule type" value="Genomic_DNA"/>
</dbReference>
<dbReference type="SMR" id="V5XYQ2"/>
<dbReference type="GO" id="GO:0005634">
    <property type="term" value="C:nucleus"/>
    <property type="evidence" value="ECO:0007669"/>
    <property type="project" value="UniProtKB-SubCell"/>
</dbReference>
<dbReference type="GO" id="GO:0003677">
    <property type="term" value="F:DNA binding"/>
    <property type="evidence" value="ECO:0007669"/>
    <property type="project" value="UniProtKB-KW"/>
</dbReference>
<dbReference type="GO" id="GO:0000981">
    <property type="term" value="F:DNA-binding transcription factor activity, RNA polymerase II-specific"/>
    <property type="evidence" value="ECO:0007669"/>
    <property type="project" value="InterPro"/>
</dbReference>
<dbReference type="GO" id="GO:0008270">
    <property type="term" value="F:zinc ion binding"/>
    <property type="evidence" value="ECO:0007669"/>
    <property type="project" value="InterPro"/>
</dbReference>
<dbReference type="CDD" id="cd00067">
    <property type="entry name" value="GAL4"/>
    <property type="match status" value="1"/>
</dbReference>
<dbReference type="Gene3D" id="4.10.240.10">
    <property type="entry name" value="Zn(2)-C6 fungal-type DNA-binding domain"/>
    <property type="match status" value="1"/>
</dbReference>
<dbReference type="InterPro" id="IPR050675">
    <property type="entry name" value="OAF3"/>
</dbReference>
<dbReference type="InterPro" id="IPR036864">
    <property type="entry name" value="Zn2-C6_fun-type_DNA-bd_sf"/>
</dbReference>
<dbReference type="InterPro" id="IPR001138">
    <property type="entry name" value="Zn2Cys6_DnaBD"/>
</dbReference>
<dbReference type="PANTHER" id="PTHR31069:SF31">
    <property type="entry name" value="MONODICTYPHENONE CLUSTER TRANSCRIPTION FACTOR-RELATED"/>
    <property type="match status" value="1"/>
</dbReference>
<dbReference type="PANTHER" id="PTHR31069">
    <property type="entry name" value="OLEATE-ACTIVATED TRANSCRIPTION FACTOR 1-RELATED"/>
    <property type="match status" value="1"/>
</dbReference>
<dbReference type="Pfam" id="PF00172">
    <property type="entry name" value="Zn_clus"/>
    <property type="match status" value="1"/>
</dbReference>
<dbReference type="PRINTS" id="PR00755">
    <property type="entry name" value="AFLATOXINBRP"/>
</dbReference>
<dbReference type="SMART" id="SM00066">
    <property type="entry name" value="GAL4"/>
    <property type="match status" value="1"/>
</dbReference>
<dbReference type="SUPFAM" id="SSF57701">
    <property type="entry name" value="Zn2/Cys6 DNA-binding domain"/>
    <property type="match status" value="1"/>
</dbReference>
<dbReference type="PROSITE" id="PS00463">
    <property type="entry name" value="ZN2_CY6_FUNGAL_1"/>
    <property type="match status" value="1"/>
</dbReference>
<dbReference type="PROSITE" id="PS50048">
    <property type="entry name" value="ZN2_CY6_FUNGAL_2"/>
    <property type="match status" value="1"/>
</dbReference>